<evidence type="ECO:0000255" key="1">
    <source>
        <dbReference type="HAMAP-Rule" id="MF_00815"/>
    </source>
</evidence>
<name>ATPG_STRGC</name>
<proteinExistence type="inferred from homology"/>
<accession>A8AYG2</accession>
<protein>
    <recommendedName>
        <fullName evidence="1">ATP synthase gamma chain</fullName>
    </recommendedName>
    <alternativeName>
        <fullName evidence="1">ATP synthase F1 sector gamma subunit</fullName>
    </alternativeName>
    <alternativeName>
        <fullName evidence="1">F-ATPase gamma subunit</fullName>
    </alternativeName>
</protein>
<organism>
    <name type="scientific">Streptococcus gordonii (strain Challis / ATCC 35105 / BCRC 15272 / CH1 / DL1 / V288)</name>
    <dbReference type="NCBI Taxonomy" id="467705"/>
    <lineage>
        <taxon>Bacteria</taxon>
        <taxon>Bacillati</taxon>
        <taxon>Bacillota</taxon>
        <taxon>Bacilli</taxon>
        <taxon>Lactobacillales</taxon>
        <taxon>Streptococcaceae</taxon>
        <taxon>Streptococcus</taxon>
    </lineage>
</organism>
<keyword id="KW-0066">ATP synthesis</keyword>
<keyword id="KW-1003">Cell membrane</keyword>
<keyword id="KW-0139">CF(1)</keyword>
<keyword id="KW-0375">Hydrogen ion transport</keyword>
<keyword id="KW-0406">Ion transport</keyword>
<keyword id="KW-0472">Membrane</keyword>
<keyword id="KW-1185">Reference proteome</keyword>
<keyword id="KW-0813">Transport</keyword>
<comment type="function">
    <text evidence="1">Produces ATP from ADP in the presence of a proton gradient across the membrane. The gamma chain is believed to be important in regulating ATPase activity and the flow of protons through the CF(0) complex.</text>
</comment>
<comment type="subunit">
    <text evidence="1">F-type ATPases have 2 components, CF(1) - the catalytic core - and CF(0) - the membrane proton channel. CF(1) has five subunits: alpha(3), beta(3), gamma(1), delta(1), epsilon(1). CF(0) has three main subunits: a, b and c.</text>
</comment>
<comment type="subcellular location">
    <subcellularLocation>
        <location evidence="1">Cell membrane</location>
        <topology evidence="1">Peripheral membrane protein</topology>
    </subcellularLocation>
</comment>
<comment type="similarity">
    <text evidence="1">Belongs to the ATPase gamma chain family.</text>
</comment>
<sequence>MAVSLNDIKNKIASTKNTSQITNAMQMVSAAKLGKSEEAAKNFQIYASKVRKLLTDLLHGHEAENAKYHPMLTSRPVKKTGYIVITSDRGLVGGYNATILKAMMELKAEYHPMGDDFEILCIGGVGADFCRARGVQPVYELRGLADQPSFDEVRKIINKAIEMYQNELFDELYVCYNHHVNSLTSQMRIEQMLPIIDLDPNEADEDYTVNLELESSREAILDQLLPQFAESMIYGAIIDAKTAENAAGMTAMQTATDNAKKVISDLTIQYNRARQAAITQEITEIVAGASALE</sequence>
<reference key="1">
    <citation type="journal article" date="2007" name="J. Bacteriol.">
        <title>Genome-wide transcriptional changes in Streptococcus gordonii in response to competence signaling peptide.</title>
        <authorList>
            <person name="Vickerman M.M."/>
            <person name="Iobst S."/>
            <person name="Jesionowski A.M."/>
            <person name="Gill S.R."/>
        </authorList>
    </citation>
    <scope>NUCLEOTIDE SEQUENCE [LARGE SCALE GENOMIC DNA]</scope>
    <source>
        <strain>Challis / ATCC 35105 / BCRC 15272 / CH1 / DL1 / V288</strain>
    </source>
</reference>
<dbReference type="EMBL" id="CP000725">
    <property type="protein sequence ID" value="ABV09298.1"/>
    <property type="molecule type" value="Genomic_DNA"/>
</dbReference>
<dbReference type="RefSeq" id="WP_012130614.1">
    <property type="nucleotide sequence ID" value="NC_009785.1"/>
</dbReference>
<dbReference type="SMR" id="A8AYG2"/>
<dbReference type="STRING" id="467705.SGO_1543"/>
<dbReference type="KEGG" id="sgo:SGO_1543"/>
<dbReference type="eggNOG" id="COG0224">
    <property type="taxonomic scope" value="Bacteria"/>
</dbReference>
<dbReference type="HOGENOM" id="CLU_050669_0_1_9"/>
<dbReference type="Proteomes" id="UP000001131">
    <property type="component" value="Chromosome"/>
</dbReference>
<dbReference type="GO" id="GO:0005886">
    <property type="term" value="C:plasma membrane"/>
    <property type="evidence" value="ECO:0007669"/>
    <property type="project" value="UniProtKB-SubCell"/>
</dbReference>
<dbReference type="GO" id="GO:0045259">
    <property type="term" value="C:proton-transporting ATP synthase complex"/>
    <property type="evidence" value="ECO:0007669"/>
    <property type="project" value="UniProtKB-KW"/>
</dbReference>
<dbReference type="GO" id="GO:0005524">
    <property type="term" value="F:ATP binding"/>
    <property type="evidence" value="ECO:0007669"/>
    <property type="project" value="UniProtKB-UniRule"/>
</dbReference>
<dbReference type="GO" id="GO:0046933">
    <property type="term" value="F:proton-transporting ATP synthase activity, rotational mechanism"/>
    <property type="evidence" value="ECO:0007669"/>
    <property type="project" value="UniProtKB-UniRule"/>
</dbReference>
<dbReference type="GO" id="GO:0042777">
    <property type="term" value="P:proton motive force-driven plasma membrane ATP synthesis"/>
    <property type="evidence" value="ECO:0007669"/>
    <property type="project" value="UniProtKB-UniRule"/>
</dbReference>
<dbReference type="CDD" id="cd12151">
    <property type="entry name" value="F1-ATPase_gamma"/>
    <property type="match status" value="1"/>
</dbReference>
<dbReference type="FunFam" id="3.40.1380.10:FF:000002">
    <property type="entry name" value="ATP synthase gamma chain"/>
    <property type="match status" value="1"/>
</dbReference>
<dbReference type="Gene3D" id="3.40.1380.10">
    <property type="match status" value="1"/>
</dbReference>
<dbReference type="Gene3D" id="1.10.287.80">
    <property type="entry name" value="ATP synthase, gamma subunit, helix hairpin domain"/>
    <property type="match status" value="1"/>
</dbReference>
<dbReference type="HAMAP" id="MF_00815">
    <property type="entry name" value="ATP_synth_gamma_bact"/>
    <property type="match status" value="1"/>
</dbReference>
<dbReference type="InterPro" id="IPR035968">
    <property type="entry name" value="ATP_synth_F1_ATPase_gsu"/>
</dbReference>
<dbReference type="InterPro" id="IPR000131">
    <property type="entry name" value="ATP_synth_F1_gsu"/>
</dbReference>
<dbReference type="InterPro" id="IPR023632">
    <property type="entry name" value="ATP_synth_F1_gsu_CS"/>
</dbReference>
<dbReference type="NCBIfam" id="TIGR01146">
    <property type="entry name" value="ATPsyn_F1gamma"/>
    <property type="match status" value="1"/>
</dbReference>
<dbReference type="NCBIfam" id="NF004147">
    <property type="entry name" value="PRK05621.2-1"/>
    <property type="match status" value="1"/>
</dbReference>
<dbReference type="PANTHER" id="PTHR11693">
    <property type="entry name" value="ATP SYNTHASE GAMMA CHAIN"/>
    <property type="match status" value="1"/>
</dbReference>
<dbReference type="PANTHER" id="PTHR11693:SF22">
    <property type="entry name" value="ATP SYNTHASE SUBUNIT GAMMA, MITOCHONDRIAL"/>
    <property type="match status" value="1"/>
</dbReference>
<dbReference type="Pfam" id="PF00231">
    <property type="entry name" value="ATP-synt"/>
    <property type="match status" value="1"/>
</dbReference>
<dbReference type="PRINTS" id="PR00126">
    <property type="entry name" value="ATPASEGAMMA"/>
</dbReference>
<dbReference type="SUPFAM" id="SSF52943">
    <property type="entry name" value="ATP synthase (F1-ATPase), gamma subunit"/>
    <property type="match status" value="1"/>
</dbReference>
<dbReference type="PROSITE" id="PS00153">
    <property type="entry name" value="ATPASE_GAMMA"/>
    <property type="match status" value="1"/>
</dbReference>
<gene>
    <name evidence="1" type="primary">atpG</name>
    <name type="ordered locus">SGO_1543</name>
</gene>
<feature type="chain" id="PRO_1000083816" description="ATP synthase gamma chain">
    <location>
        <begin position="1"/>
        <end position="293"/>
    </location>
</feature>